<name>SEC24_EREGS</name>
<evidence type="ECO:0000250" key="1"/>
<evidence type="ECO:0000305" key="2"/>
<dbReference type="EMBL" id="AE016817">
    <property type="protein sequence ID" value="AAS51681.1"/>
    <property type="molecule type" value="Genomic_DNA"/>
</dbReference>
<dbReference type="RefSeq" id="NP_983857.1">
    <property type="nucleotide sequence ID" value="NM_209210.1"/>
</dbReference>
<dbReference type="SMR" id="Q75B16"/>
<dbReference type="FunCoup" id="Q75B16">
    <property type="interactions" value="852"/>
</dbReference>
<dbReference type="STRING" id="284811.Q75B16"/>
<dbReference type="EnsemblFungi" id="AAS51681">
    <property type="protein sequence ID" value="AAS51681"/>
    <property type="gene ID" value="AGOS_ADL239C"/>
</dbReference>
<dbReference type="GeneID" id="4619992"/>
<dbReference type="KEGG" id="ago:AGOS_ADL239C"/>
<dbReference type="eggNOG" id="KOG1985">
    <property type="taxonomic scope" value="Eukaryota"/>
</dbReference>
<dbReference type="HOGENOM" id="CLU_004589_2_1_1"/>
<dbReference type="InParanoid" id="Q75B16"/>
<dbReference type="OMA" id="AVECSKQ"/>
<dbReference type="OrthoDB" id="49016at2759"/>
<dbReference type="Proteomes" id="UP000000591">
    <property type="component" value="Chromosome IV"/>
</dbReference>
<dbReference type="GO" id="GO:0005801">
    <property type="term" value="C:cis-Golgi network"/>
    <property type="evidence" value="ECO:0007669"/>
    <property type="project" value="EnsemblFungi"/>
</dbReference>
<dbReference type="GO" id="GO:0030127">
    <property type="term" value="C:COPII vesicle coat"/>
    <property type="evidence" value="ECO:0000318"/>
    <property type="project" value="GO_Central"/>
</dbReference>
<dbReference type="GO" id="GO:0070971">
    <property type="term" value="C:endoplasmic reticulum exit site"/>
    <property type="evidence" value="ECO:0000318"/>
    <property type="project" value="GO_Central"/>
</dbReference>
<dbReference type="GO" id="GO:0005789">
    <property type="term" value="C:endoplasmic reticulum membrane"/>
    <property type="evidence" value="ECO:0007669"/>
    <property type="project" value="UniProtKB-SubCell"/>
</dbReference>
<dbReference type="GO" id="GO:1990753">
    <property type="term" value="C:equatorial cell cortex"/>
    <property type="evidence" value="ECO:0007669"/>
    <property type="project" value="EnsemblFungi"/>
</dbReference>
<dbReference type="GO" id="GO:0000139">
    <property type="term" value="C:Golgi membrane"/>
    <property type="evidence" value="ECO:0007669"/>
    <property type="project" value="UniProtKB-SubCell"/>
</dbReference>
<dbReference type="GO" id="GO:0005048">
    <property type="term" value="F:signal sequence binding"/>
    <property type="evidence" value="ECO:0007669"/>
    <property type="project" value="EnsemblFungi"/>
</dbReference>
<dbReference type="GO" id="GO:0000149">
    <property type="term" value="F:SNARE binding"/>
    <property type="evidence" value="ECO:0000318"/>
    <property type="project" value="GO_Central"/>
</dbReference>
<dbReference type="GO" id="GO:0008270">
    <property type="term" value="F:zinc ion binding"/>
    <property type="evidence" value="ECO:0000318"/>
    <property type="project" value="GO_Central"/>
</dbReference>
<dbReference type="GO" id="GO:0090110">
    <property type="term" value="P:COPII-coated vesicle cargo loading"/>
    <property type="evidence" value="ECO:0000318"/>
    <property type="project" value="GO_Central"/>
</dbReference>
<dbReference type="GO" id="GO:0006886">
    <property type="term" value="P:intracellular protein transport"/>
    <property type="evidence" value="ECO:0007669"/>
    <property type="project" value="InterPro"/>
</dbReference>
<dbReference type="GO" id="GO:0016236">
    <property type="term" value="P:macroautophagy"/>
    <property type="evidence" value="ECO:0007669"/>
    <property type="project" value="EnsemblFungi"/>
</dbReference>
<dbReference type="GO" id="GO:1902953">
    <property type="term" value="P:positive regulation of ER to Golgi vesicle-mediated transport"/>
    <property type="evidence" value="ECO:0007669"/>
    <property type="project" value="EnsemblFungi"/>
</dbReference>
<dbReference type="GO" id="GO:0070863">
    <property type="term" value="P:positive regulation of protein exit from endoplasmic reticulum"/>
    <property type="evidence" value="ECO:0007669"/>
    <property type="project" value="EnsemblFungi"/>
</dbReference>
<dbReference type="CDD" id="cd01479">
    <property type="entry name" value="Sec24-like"/>
    <property type="match status" value="1"/>
</dbReference>
<dbReference type="FunFam" id="3.40.20.10:FF:000049">
    <property type="entry name" value="Vesicle coat component"/>
    <property type="match status" value="1"/>
</dbReference>
<dbReference type="FunFam" id="3.40.50.410:FF:000081">
    <property type="entry name" value="Vesicle coat component"/>
    <property type="match status" value="1"/>
</dbReference>
<dbReference type="Gene3D" id="2.60.40.1670">
    <property type="entry name" value="beta-sandwich domain of Sec23/24"/>
    <property type="match status" value="1"/>
</dbReference>
<dbReference type="Gene3D" id="1.20.120.730">
    <property type="entry name" value="Sec23/Sec24 helical domain"/>
    <property type="match status" value="1"/>
</dbReference>
<dbReference type="Gene3D" id="3.40.20.10">
    <property type="entry name" value="Severin"/>
    <property type="match status" value="1"/>
</dbReference>
<dbReference type="Gene3D" id="3.40.50.410">
    <property type="entry name" value="von Willebrand factor, type A domain"/>
    <property type="match status" value="1"/>
</dbReference>
<dbReference type="Gene3D" id="2.30.30.380">
    <property type="entry name" value="Zn-finger domain of Sec23/24"/>
    <property type="match status" value="1"/>
</dbReference>
<dbReference type="InterPro" id="IPR029006">
    <property type="entry name" value="ADF-H/Gelsolin-like_dom_sf"/>
</dbReference>
<dbReference type="InterPro" id="IPR007123">
    <property type="entry name" value="Gelsolin-like_dom"/>
</dbReference>
<dbReference type="InterPro" id="IPR036180">
    <property type="entry name" value="Gelsolin-like_dom_sf"/>
</dbReference>
<dbReference type="InterPro" id="IPR006900">
    <property type="entry name" value="Sec23/24_helical_dom"/>
</dbReference>
<dbReference type="InterPro" id="IPR036175">
    <property type="entry name" value="Sec23/24_helical_dom_sf"/>
</dbReference>
<dbReference type="InterPro" id="IPR006896">
    <property type="entry name" value="Sec23/24_trunk_dom"/>
</dbReference>
<dbReference type="InterPro" id="IPR012990">
    <property type="entry name" value="Sec23_24_beta_S"/>
</dbReference>
<dbReference type="InterPro" id="IPR050550">
    <property type="entry name" value="SEC23_SEC24_subfamily"/>
</dbReference>
<dbReference type="InterPro" id="IPR041742">
    <property type="entry name" value="Sec24-like_trunk_dom"/>
</dbReference>
<dbReference type="InterPro" id="IPR036465">
    <property type="entry name" value="vWFA_dom_sf"/>
</dbReference>
<dbReference type="InterPro" id="IPR006895">
    <property type="entry name" value="Znf_Sec23_Sec24"/>
</dbReference>
<dbReference type="InterPro" id="IPR036174">
    <property type="entry name" value="Znf_Sec23_Sec24_sf"/>
</dbReference>
<dbReference type="PANTHER" id="PTHR13803">
    <property type="entry name" value="SEC24-RELATED PROTEIN"/>
    <property type="match status" value="1"/>
</dbReference>
<dbReference type="PANTHER" id="PTHR13803:SF39">
    <property type="entry name" value="SECRETORY 24AB, ISOFORM A"/>
    <property type="match status" value="1"/>
</dbReference>
<dbReference type="Pfam" id="PF00626">
    <property type="entry name" value="Gelsolin"/>
    <property type="match status" value="1"/>
</dbReference>
<dbReference type="Pfam" id="PF08033">
    <property type="entry name" value="Sec23_BS"/>
    <property type="match status" value="1"/>
</dbReference>
<dbReference type="Pfam" id="PF04815">
    <property type="entry name" value="Sec23_helical"/>
    <property type="match status" value="1"/>
</dbReference>
<dbReference type="Pfam" id="PF04811">
    <property type="entry name" value="Sec23_trunk"/>
    <property type="match status" value="1"/>
</dbReference>
<dbReference type="Pfam" id="PF04810">
    <property type="entry name" value="zf-Sec23_Sec24"/>
    <property type="match status" value="1"/>
</dbReference>
<dbReference type="SUPFAM" id="SSF81995">
    <property type="entry name" value="beta-sandwich domain of Sec23/24"/>
    <property type="match status" value="1"/>
</dbReference>
<dbReference type="SUPFAM" id="SSF82754">
    <property type="entry name" value="C-terminal, gelsolin-like domain of Sec23/24"/>
    <property type="match status" value="1"/>
</dbReference>
<dbReference type="SUPFAM" id="SSF81811">
    <property type="entry name" value="Helical domain of Sec23/24"/>
    <property type="match status" value="1"/>
</dbReference>
<dbReference type="SUPFAM" id="SSF53300">
    <property type="entry name" value="vWA-like"/>
    <property type="match status" value="1"/>
</dbReference>
<dbReference type="SUPFAM" id="SSF82919">
    <property type="entry name" value="Zn-finger domain of Sec23/24"/>
    <property type="match status" value="1"/>
</dbReference>
<organism>
    <name type="scientific">Eremothecium gossypii (strain ATCC 10895 / CBS 109.51 / FGSC 9923 / NRRL Y-1056)</name>
    <name type="common">Yeast</name>
    <name type="synonym">Ashbya gossypii</name>
    <dbReference type="NCBI Taxonomy" id="284811"/>
    <lineage>
        <taxon>Eukaryota</taxon>
        <taxon>Fungi</taxon>
        <taxon>Dikarya</taxon>
        <taxon>Ascomycota</taxon>
        <taxon>Saccharomycotina</taxon>
        <taxon>Saccharomycetes</taxon>
        <taxon>Saccharomycetales</taxon>
        <taxon>Saccharomycetaceae</taxon>
        <taxon>Eremothecium</taxon>
    </lineage>
</organism>
<feature type="chain" id="PRO_0000295475" description="Protein transport protein SEC24">
    <location>
        <begin position="1"/>
        <end position="891"/>
    </location>
</feature>
<feature type="region of interest" description="Zinc finger-like">
    <location>
        <begin position="207"/>
        <end position="232"/>
    </location>
</feature>
<feature type="binding site" evidence="1">
    <location>
        <position position="207"/>
    </location>
    <ligand>
        <name>Zn(2+)</name>
        <dbReference type="ChEBI" id="CHEBI:29105"/>
    </ligand>
</feature>
<feature type="binding site" evidence="1">
    <location>
        <position position="210"/>
    </location>
    <ligand>
        <name>Zn(2+)</name>
        <dbReference type="ChEBI" id="CHEBI:29105"/>
    </ligand>
</feature>
<feature type="binding site" evidence="1">
    <location>
        <position position="229"/>
    </location>
    <ligand>
        <name>Zn(2+)</name>
        <dbReference type="ChEBI" id="CHEBI:29105"/>
    </ligand>
</feature>
<feature type="binding site" evidence="1">
    <location>
        <position position="232"/>
    </location>
    <ligand>
        <name>Zn(2+)</name>
        <dbReference type="ChEBI" id="CHEBI:29105"/>
    </ligand>
</feature>
<comment type="function">
    <text evidence="1">Component of the coat protein complex II (COPII) which promotes the formation of transport vesicles from the endoplasmic reticulum (ER). The coat has two main functions, the physical deformation of the endoplasmic reticulum membrane into vesicles and the selection of cargo molecules (By similarity).</text>
</comment>
<comment type="subunit">
    <text evidence="1">The COPII coat is composed of at least 5 proteins: the SEC23/24 complex, the SEC13/31 complex, and the protein SAR1. Golgi apparatus membrane; Peripheral membrane protein; Cytoplasmic side.</text>
</comment>
<comment type="subcellular location">
    <subcellularLocation>
        <location evidence="1">Cytoplasm</location>
    </subcellularLocation>
    <subcellularLocation>
        <location evidence="1">Cytoplasmic vesicle</location>
        <location evidence="1">COPII-coated vesicle membrane</location>
        <topology evidence="1">Peripheral membrane protein</topology>
        <orientation evidence="1">Cytoplasmic side</orientation>
    </subcellularLocation>
    <subcellularLocation>
        <location evidence="1">Endoplasmic reticulum membrane</location>
        <topology evidence="1">Peripheral membrane protein</topology>
        <orientation evidence="1">Cytoplasmic side</orientation>
    </subcellularLocation>
    <subcellularLocation>
        <location evidence="1">Golgi apparatus membrane</location>
        <topology evidence="1">Peripheral membrane protein</topology>
        <orientation evidence="1">Cytoplasmic side</orientation>
    </subcellularLocation>
</comment>
<comment type="similarity">
    <text evidence="2">Belongs to the SEC23/SEC24 family. SEC24 subfamily.</text>
</comment>
<accession>Q75B16</accession>
<sequence length="891" mass="99622">MSGHKKRVYPEAQYQYGAQPAAPSQGFPPGPAMSPPMQAQQFLTPAQQQLHQQIDQATSSMGNMNLHNVPVVDPSTFYQAGVASPPVAPHAVAGTQYNEQPYGHMSIGKPMNQLYPIDLFQELPPPITDLSLPPPPLLVPAERIVVPSEEANASPDYLRCTLNAIPKTNGLLKKSKLPLAMVIRPYLHLEDSIDPPPLNMDGCIVRCRRCRSYINPFVTFLEGGRRWRCNFCNLANDVPQAFDMDMQGVPINRYDRNEIQRAVVEYLAPKEYAVRQPPPSCYAFVFDVSQNAIKNGLLATAARTLLESLDSLPNYDERTRITILAVDHTIHYFSVPLDEEGDHIRMMDVVDLDEPFLPMPDTMFVSLKDCRNNLEKLLSQIPDIFQSNILPKFALGPALKAAHNLIKGIGGKIIVVSATLPNIGIGKLNKRNEASVANTSKEASQLLSCGDSFYKNFTIDCNKTQVTIDMFLASDDYVDFASVSNLGRYTGGQTHFYPGFTALNMIDVTKFSKEFSKHITMDLSMEAVMRARGSTGLRMSRFYGHFFNRSSDLCAFPTFPRDQSYVFEISIDEQIVRDYVYLQIAVLLSQNTGQRRIRVITVCIPTTDSLAEVYASADQLAMTVYHSQKAIEKVMSSGFEDAREYLDRSVQEVLATYKKEIAMSNTAGGAPLRLCANLRMWPLLMHSLTKHMAFRSGIIPADHRAAALNALESLPLPYFIKNIYPSVYSLHDMPDEAGLPNENGEIVLPQPINATSSLFERYGLYLLDTGMDMFLWLGGDAVPELVMDVFGTQDIMQIQVGKGELPILENSEFNERVRNVIVKLREHDDIITYPTLHIVRGASPSEPMNHASAREVASLRLWATSQLVEDKVQSSFTYREFLQSMKTKTSK</sequence>
<gene>
    <name type="primary">SEC24</name>
    <name type="ordered locus">ADL239C</name>
</gene>
<proteinExistence type="inferred from homology"/>
<keyword id="KW-0963">Cytoplasm</keyword>
<keyword id="KW-0968">Cytoplasmic vesicle</keyword>
<keyword id="KW-0256">Endoplasmic reticulum</keyword>
<keyword id="KW-0931">ER-Golgi transport</keyword>
<keyword id="KW-0333">Golgi apparatus</keyword>
<keyword id="KW-0472">Membrane</keyword>
<keyword id="KW-0479">Metal-binding</keyword>
<keyword id="KW-0653">Protein transport</keyword>
<keyword id="KW-1185">Reference proteome</keyword>
<keyword id="KW-0813">Transport</keyword>
<keyword id="KW-0862">Zinc</keyword>
<reference key="1">
    <citation type="journal article" date="2004" name="Science">
        <title>The Ashbya gossypii genome as a tool for mapping the ancient Saccharomyces cerevisiae genome.</title>
        <authorList>
            <person name="Dietrich F.S."/>
            <person name="Voegeli S."/>
            <person name="Brachat S."/>
            <person name="Lerch A."/>
            <person name="Gates K."/>
            <person name="Steiner S."/>
            <person name="Mohr C."/>
            <person name="Poehlmann R."/>
            <person name="Luedi P."/>
            <person name="Choi S."/>
            <person name="Wing R.A."/>
            <person name="Flavier A."/>
            <person name="Gaffney T.D."/>
            <person name="Philippsen P."/>
        </authorList>
    </citation>
    <scope>NUCLEOTIDE SEQUENCE [LARGE SCALE GENOMIC DNA]</scope>
    <source>
        <strain>ATCC 10895 / CBS 109.51 / FGSC 9923 / NRRL Y-1056</strain>
    </source>
</reference>
<reference key="2">
    <citation type="journal article" date="2013" name="G3 (Bethesda)">
        <title>Genomes of Ashbya fungi isolated from insects reveal four mating-type loci, numerous translocations, lack of transposons, and distinct gene duplications.</title>
        <authorList>
            <person name="Dietrich F.S."/>
            <person name="Voegeli S."/>
            <person name="Kuo S."/>
            <person name="Philippsen P."/>
        </authorList>
    </citation>
    <scope>GENOME REANNOTATION</scope>
    <source>
        <strain>ATCC 10895 / CBS 109.51 / FGSC 9923 / NRRL Y-1056</strain>
    </source>
</reference>
<protein>
    <recommendedName>
        <fullName>Protein transport protein SEC24</fullName>
    </recommendedName>
</protein>